<proteinExistence type="inferred from homology"/>
<name>PURQ_CAMJE</name>
<keyword id="KW-0067">ATP-binding</keyword>
<keyword id="KW-0963">Cytoplasm</keyword>
<keyword id="KW-0315">Glutamine amidotransferase</keyword>
<keyword id="KW-0378">Hydrolase</keyword>
<keyword id="KW-0436">Ligase</keyword>
<keyword id="KW-0547">Nucleotide-binding</keyword>
<keyword id="KW-0658">Purine biosynthesis</keyword>
<keyword id="KW-1185">Reference proteome</keyword>
<organism>
    <name type="scientific">Campylobacter jejuni subsp. jejuni serotype O:2 (strain ATCC 700819 / NCTC 11168)</name>
    <dbReference type="NCBI Taxonomy" id="192222"/>
    <lineage>
        <taxon>Bacteria</taxon>
        <taxon>Pseudomonadati</taxon>
        <taxon>Campylobacterota</taxon>
        <taxon>Epsilonproteobacteria</taxon>
        <taxon>Campylobacterales</taxon>
        <taxon>Campylobacteraceae</taxon>
        <taxon>Campylobacter</taxon>
    </lineage>
</organism>
<accession>Q9PHZ7</accession>
<accession>Q0PB01</accession>
<sequence>MKVAIIRFPGTNCEFDTTYAFEKLGVKTQIVWHEEKEFDADLVVLPGGFSYGDYLRCAAIAKLAPAMQGVFNHAKKGGYILGICNGFQILLESGLLKGAMKHNNNLSFISKNQSLRVVSNDNAFLKNFKKDEIINLPIAHGEGNYYADETTLKELQDKDLIILKYEPNPNGSVFDIAGICDENKKIFGLMPHPERACEKVLGNDVGLKMLKGFLLENFINFNF</sequence>
<evidence type="ECO:0000255" key="1">
    <source>
        <dbReference type="HAMAP-Rule" id="MF_00421"/>
    </source>
</evidence>
<protein>
    <recommendedName>
        <fullName evidence="1">Phosphoribosylformylglycinamidine synthase subunit PurQ</fullName>
        <shortName evidence="1">FGAM synthase</shortName>
        <ecNumber evidence="1">6.3.5.3</ecNumber>
    </recommendedName>
    <alternativeName>
        <fullName evidence="1">Formylglycinamide ribonucleotide amidotransferase subunit I</fullName>
        <shortName evidence="1">FGAR amidotransferase I</shortName>
        <shortName evidence="1">FGAR-AT I</shortName>
    </alternativeName>
    <alternativeName>
        <fullName evidence="1">Glutaminase PurQ</fullName>
        <ecNumber evidence="1">3.5.1.2</ecNumber>
    </alternativeName>
    <alternativeName>
        <fullName evidence="1">Phosphoribosylformylglycinamidine synthase subunit I</fullName>
    </alternativeName>
</protein>
<reference key="1">
    <citation type="journal article" date="2000" name="Nature">
        <title>The genome sequence of the food-borne pathogen Campylobacter jejuni reveals hypervariable sequences.</title>
        <authorList>
            <person name="Parkhill J."/>
            <person name="Wren B.W."/>
            <person name="Mungall K.L."/>
            <person name="Ketley J.M."/>
            <person name="Churcher C.M."/>
            <person name="Basham D."/>
            <person name="Chillingworth T."/>
            <person name="Davies R.M."/>
            <person name="Feltwell T."/>
            <person name="Holroyd S."/>
            <person name="Jagels K."/>
            <person name="Karlyshev A.V."/>
            <person name="Moule S."/>
            <person name="Pallen M.J."/>
            <person name="Penn C.W."/>
            <person name="Quail M.A."/>
            <person name="Rajandream M.A."/>
            <person name="Rutherford K.M."/>
            <person name="van Vliet A.H.M."/>
            <person name="Whitehead S."/>
            <person name="Barrell B.G."/>
        </authorList>
    </citation>
    <scope>NUCLEOTIDE SEQUENCE [LARGE SCALE GENOMIC DNA]</scope>
    <source>
        <strain>ATCC 700819 / NCTC 11168</strain>
    </source>
</reference>
<feature type="chain" id="PRO_0000100546" description="Phosphoribosylformylglycinamidine synthase subunit PurQ">
    <location>
        <begin position="1"/>
        <end position="223"/>
    </location>
</feature>
<feature type="domain" description="Glutamine amidotransferase type-1" evidence="1">
    <location>
        <begin position="2"/>
        <end position="223"/>
    </location>
</feature>
<feature type="active site" description="Nucleophile" evidence="1">
    <location>
        <position position="84"/>
    </location>
</feature>
<feature type="active site" evidence="1">
    <location>
        <position position="192"/>
    </location>
</feature>
<feature type="active site" evidence="1">
    <location>
        <position position="194"/>
    </location>
</feature>
<gene>
    <name evidence="1" type="primary">purQ</name>
    <name type="ordered locus">Cj0514</name>
</gene>
<comment type="function">
    <text evidence="1">Part of the phosphoribosylformylglycinamidine synthase complex involved in the purines biosynthetic pathway. Catalyzes the ATP-dependent conversion of formylglycinamide ribonucleotide (FGAR) and glutamine to yield formylglycinamidine ribonucleotide (FGAM) and glutamate. The FGAM synthase complex is composed of three subunits. PurQ produces an ammonia molecule by converting glutamine to glutamate. PurL transfers the ammonia molecule to FGAR to form FGAM in an ATP-dependent manner. PurS interacts with PurQ and PurL and is thought to assist in the transfer of the ammonia molecule from PurQ to PurL.</text>
</comment>
<comment type="catalytic activity">
    <reaction evidence="1">
        <text>N(2)-formyl-N(1)-(5-phospho-beta-D-ribosyl)glycinamide + L-glutamine + ATP + H2O = 2-formamido-N(1)-(5-O-phospho-beta-D-ribosyl)acetamidine + L-glutamate + ADP + phosphate + H(+)</text>
        <dbReference type="Rhea" id="RHEA:17129"/>
        <dbReference type="ChEBI" id="CHEBI:15377"/>
        <dbReference type="ChEBI" id="CHEBI:15378"/>
        <dbReference type="ChEBI" id="CHEBI:29985"/>
        <dbReference type="ChEBI" id="CHEBI:30616"/>
        <dbReference type="ChEBI" id="CHEBI:43474"/>
        <dbReference type="ChEBI" id="CHEBI:58359"/>
        <dbReference type="ChEBI" id="CHEBI:147286"/>
        <dbReference type="ChEBI" id="CHEBI:147287"/>
        <dbReference type="ChEBI" id="CHEBI:456216"/>
        <dbReference type="EC" id="6.3.5.3"/>
    </reaction>
</comment>
<comment type="catalytic activity">
    <reaction evidence="1">
        <text>L-glutamine + H2O = L-glutamate + NH4(+)</text>
        <dbReference type="Rhea" id="RHEA:15889"/>
        <dbReference type="ChEBI" id="CHEBI:15377"/>
        <dbReference type="ChEBI" id="CHEBI:28938"/>
        <dbReference type="ChEBI" id="CHEBI:29985"/>
        <dbReference type="ChEBI" id="CHEBI:58359"/>
        <dbReference type="EC" id="3.5.1.2"/>
    </reaction>
</comment>
<comment type="pathway">
    <text evidence="1">Purine metabolism; IMP biosynthesis via de novo pathway; 5-amino-1-(5-phospho-D-ribosyl)imidazole from N(2)-formyl-N(1)-(5-phospho-D-ribosyl)glycinamide: step 1/2.</text>
</comment>
<comment type="subunit">
    <text evidence="1">Part of the FGAM synthase complex composed of 1 PurL, 1 PurQ and 2 PurS subunits.</text>
</comment>
<comment type="subcellular location">
    <subcellularLocation>
        <location evidence="1">Cytoplasm</location>
    </subcellularLocation>
</comment>
<dbReference type="EC" id="6.3.5.3" evidence="1"/>
<dbReference type="EC" id="3.5.1.2" evidence="1"/>
<dbReference type="EMBL" id="AL111168">
    <property type="protein sequence ID" value="CAL34661.1"/>
    <property type="molecule type" value="Genomic_DNA"/>
</dbReference>
<dbReference type="PIR" id="C81397">
    <property type="entry name" value="C81397"/>
</dbReference>
<dbReference type="RefSeq" id="WP_002858528.1">
    <property type="nucleotide sequence ID" value="NZ_SZUC01000002.1"/>
</dbReference>
<dbReference type="RefSeq" id="YP_002343946.1">
    <property type="nucleotide sequence ID" value="NC_002163.1"/>
</dbReference>
<dbReference type="SMR" id="Q9PHZ7"/>
<dbReference type="IntAct" id="Q9PHZ7">
    <property type="interactions" value="12"/>
</dbReference>
<dbReference type="STRING" id="192222.Cj0514"/>
<dbReference type="PaxDb" id="192222-Cj0514"/>
<dbReference type="EnsemblBacteria" id="CAL34661">
    <property type="protein sequence ID" value="CAL34661"/>
    <property type="gene ID" value="Cj0514"/>
</dbReference>
<dbReference type="GeneID" id="904843"/>
<dbReference type="KEGG" id="cje:Cj0514"/>
<dbReference type="PATRIC" id="fig|192222.6.peg.507"/>
<dbReference type="eggNOG" id="COG0047">
    <property type="taxonomic scope" value="Bacteria"/>
</dbReference>
<dbReference type="HOGENOM" id="CLU_001031_3_1_7"/>
<dbReference type="OrthoDB" id="9804441at2"/>
<dbReference type="UniPathway" id="UPA00074">
    <property type="reaction ID" value="UER00128"/>
</dbReference>
<dbReference type="Proteomes" id="UP000000799">
    <property type="component" value="Chromosome"/>
</dbReference>
<dbReference type="GO" id="GO:0005737">
    <property type="term" value="C:cytoplasm"/>
    <property type="evidence" value="ECO:0007669"/>
    <property type="project" value="UniProtKB-SubCell"/>
</dbReference>
<dbReference type="GO" id="GO:0005524">
    <property type="term" value="F:ATP binding"/>
    <property type="evidence" value="ECO:0007669"/>
    <property type="project" value="UniProtKB-KW"/>
</dbReference>
<dbReference type="GO" id="GO:0004359">
    <property type="term" value="F:glutaminase activity"/>
    <property type="evidence" value="ECO:0007669"/>
    <property type="project" value="UniProtKB-EC"/>
</dbReference>
<dbReference type="GO" id="GO:0004642">
    <property type="term" value="F:phosphoribosylformylglycinamidine synthase activity"/>
    <property type="evidence" value="ECO:0007669"/>
    <property type="project" value="UniProtKB-UniRule"/>
</dbReference>
<dbReference type="GO" id="GO:0006189">
    <property type="term" value="P:'de novo' IMP biosynthetic process"/>
    <property type="evidence" value="ECO:0007669"/>
    <property type="project" value="UniProtKB-UniRule"/>
</dbReference>
<dbReference type="CDD" id="cd01740">
    <property type="entry name" value="GATase1_FGAR_AT"/>
    <property type="match status" value="1"/>
</dbReference>
<dbReference type="Gene3D" id="3.40.50.880">
    <property type="match status" value="1"/>
</dbReference>
<dbReference type="HAMAP" id="MF_00421">
    <property type="entry name" value="PurQ"/>
    <property type="match status" value="1"/>
</dbReference>
<dbReference type="InterPro" id="IPR029062">
    <property type="entry name" value="Class_I_gatase-like"/>
</dbReference>
<dbReference type="InterPro" id="IPR010075">
    <property type="entry name" value="PRibForGlyAmidine_synth_PurQ"/>
</dbReference>
<dbReference type="NCBIfam" id="TIGR01737">
    <property type="entry name" value="FGAM_synth_I"/>
    <property type="match status" value="1"/>
</dbReference>
<dbReference type="NCBIfam" id="NF002957">
    <property type="entry name" value="PRK03619.1"/>
    <property type="match status" value="1"/>
</dbReference>
<dbReference type="PANTHER" id="PTHR47552">
    <property type="entry name" value="PHOSPHORIBOSYLFORMYLGLYCINAMIDINE SYNTHASE SUBUNIT PURQ"/>
    <property type="match status" value="1"/>
</dbReference>
<dbReference type="PANTHER" id="PTHR47552:SF1">
    <property type="entry name" value="PHOSPHORIBOSYLFORMYLGLYCINAMIDINE SYNTHASE SUBUNIT PURQ"/>
    <property type="match status" value="1"/>
</dbReference>
<dbReference type="Pfam" id="PF13507">
    <property type="entry name" value="GATase_5"/>
    <property type="match status" value="1"/>
</dbReference>
<dbReference type="PIRSF" id="PIRSF001586">
    <property type="entry name" value="FGAM_synth_I"/>
    <property type="match status" value="1"/>
</dbReference>
<dbReference type="SMART" id="SM01211">
    <property type="entry name" value="GATase_5"/>
    <property type="match status" value="1"/>
</dbReference>
<dbReference type="SUPFAM" id="SSF52317">
    <property type="entry name" value="Class I glutamine amidotransferase-like"/>
    <property type="match status" value="1"/>
</dbReference>
<dbReference type="PROSITE" id="PS51273">
    <property type="entry name" value="GATASE_TYPE_1"/>
    <property type="match status" value="1"/>
</dbReference>